<comment type="function">
    <text evidence="1">Prevents the cell division inhibition by proteins MinC and MinD at internal division sites while permitting inhibition at polar sites. This ensures cell division at the proper site by restricting the formation of a division septum at the midpoint of the long axis of the cell.</text>
</comment>
<comment type="similarity">
    <text evidence="1">Belongs to the MinE family.</text>
</comment>
<dbReference type="EMBL" id="AM286415">
    <property type="protein sequence ID" value="CAL12425.1"/>
    <property type="molecule type" value="Genomic_DNA"/>
</dbReference>
<dbReference type="RefSeq" id="WP_002211180.1">
    <property type="nucleotide sequence ID" value="NC_008800.1"/>
</dbReference>
<dbReference type="RefSeq" id="YP_001006592.1">
    <property type="nucleotide sequence ID" value="NC_008800.1"/>
</dbReference>
<dbReference type="SMR" id="A1JRC1"/>
<dbReference type="GeneID" id="97456410"/>
<dbReference type="KEGG" id="yen:YE2373"/>
<dbReference type="PATRIC" id="fig|393305.7.peg.2527"/>
<dbReference type="eggNOG" id="COG0851">
    <property type="taxonomic scope" value="Bacteria"/>
</dbReference>
<dbReference type="HOGENOM" id="CLU_137929_2_2_6"/>
<dbReference type="OrthoDB" id="9802655at2"/>
<dbReference type="PRO" id="PR:A1JRC1"/>
<dbReference type="Proteomes" id="UP000000642">
    <property type="component" value="Chromosome"/>
</dbReference>
<dbReference type="GO" id="GO:0051301">
    <property type="term" value="P:cell division"/>
    <property type="evidence" value="ECO:0007669"/>
    <property type="project" value="UniProtKB-KW"/>
</dbReference>
<dbReference type="GO" id="GO:0032955">
    <property type="term" value="P:regulation of division septum assembly"/>
    <property type="evidence" value="ECO:0007669"/>
    <property type="project" value="InterPro"/>
</dbReference>
<dbReference type="FunFam" id="3.30.1070.10:FF:000001">
    <property type="entry name" value="Cell division topological specificity factor"/>
    <property type="match status" value="1"/>
</dbReference>
<dbReference type="Gene3D" id="3.30.1070.10">
    <property type="entry name" value="Cell division topological specificity factor MinE"/>
    <property type="match status" value="1"/>
</dbReference>
<dbReference type="HAMAP" id="MF_00262">
    <property type="entry name" value="MinE"/>
    <property type="match status" value="1"/>
</dbReference>
<dbReference type="InterPro" id="IPR005527">
    <property type="entry name" value="MinE"/>
</dbReference>
<dbReference type="InterPro" id="IPR036707">
    <property type="entry name" value="MinE_sf"/>
</dbReference>
<dbReference type="NCBIfam" id="TIGR01215">
    <property type="entry name" value="minE"/>
    <property type="match status" value="1"/>
</dbReference>
<dbReference type="NCBIfam" id="NF001422">
    <property type="entry name" value="PRK00296.1"/>
    <property type="match status" value="1"/>
</dbReference>
<dbReference type="Pfam" id="PF03776">
    <property type="entry name" value="MinE"/>
    <property type="match status" value="1"/>
</dbReference>
<dbReference type="SUPFAM" id="SSF55229">
    <property type="entry name" value="Cell division protein MinE topological specificity domain"/>
    <property type="match status" value="1"/>
</dbReference>
<sequence length="89" mass="10332">MALLDFFLSRKKPTANIAKERLQIIVAERRRGDSEPHYLPDLKRDILAVICKYIQIDPEMLHVQFEQKGDDISVLELNVTLPETEETPK</sequence>
<organism>
    <name type="scientific">Yersinia enterocolitica serotype O:8 / biotype 1B (strain NCTC 13174 / 8081)</name>
    <dbReference type="NCBI Taxonomy" id="393305"/>
    <lineage>
        <taxon>Bacteria</taxon>
        <taxon>Pseudomonadati</taxon>
        <taxon>Pseudomonadota</taxon>
        <taxon>Gammaproteobacteria</taxon>
        <taxon>Enterobacterales</taxon>
        <taxon>Yersiniaceae</taxon>
        <taxon>Yersinia</taxon>
    </lineage>
</organism>
<gene>
    <name evidence="1" type="primary">minE</name>
    <name type="ordered locus">YE2373</name>
</gene>
<protein>
    <recommendedName>
        <fullName evidence="1">Cell division topological specificity factor</fullName>
    </recommendedName>
</protein>
<proteinExistence type="inferred from homology"/>
<evidence type="ECO:0000255" key="1">
    <source>
        <dbReference type="HAMAP-Rule" id="MF_00262"/>
    </source>
</evidence>
<name>MINE_YERE8</name>
<keyword id="KW-0131">Cell cycle</keyword>
<keyword id="KW-0132">Cell division</keyword>
<reference key="1">
    <citation type="journal article" date="2006" name="PLoS Genet.">
        <title>The complete genome sequence and comparative genome analysis of the high pathogenicity Yersinia enterocolitica strain 8081.</title>
        <authorList>
            <person name="Thomson N.R."/>
            <person name="Howard S."/>
            <person name="Wren B.W."/>
            <person name="Holden M.T.G."/>
            <person name="Crossman L."/>
            <person name="Challis G.L."/>
            <person name="Churcher C."/>
            <person name="Mungall K."/>
            <person name="Brooks K."/>
            <person name="Chillingworth T."/>
            <person name="Feltwell T."/>
            <person name="Abdellah Z."/>
            <person name="Hauser H."/>
            <person name="Jagels K."/>
            <person name="Maddison M."/>
            <person name="Moule S."/>
            <person name="Sanders M."/>
            <person name="Whitehead S."/>
            <person name="Quail M.A."/>
            <person name="Dougan G."/>
            <person name="Parkhill J."/>
            <person name="Prentice M.B."/>
        </authorList>
    </citation>
    <scope>NUCLEOTIDE SEQUENCE [LARGE SCALE GENOMIC DNA]</scope>
    <source>
        <strain>NCTC 13174 / 8081</strain>
    </source>
</reference>
<feature type="chain" id="PRO_0000298222" description="Cell division topological specificity factor">
    <location>
        <begin position="1"/>
        <end position="89"/>
    </location>
</feature>
<accession>A1JRC1</accession>